<accession>B7GTZ5</accession>
<accession>E8MP86</accession>
<gene>
    <name evidence="1" type="primary">nucS</name>
    <name type="ordered locus">BLIJ_0316</name>
    <name type="ordered locus">Blon_0311</name>
</gene>
<organism>
    <name type="scientific">Bifidobacterium longum subsp. infantis (strain ATCC 15697 / DSM 20088 / JCM 1222 / NCTC 11817 / S12)</name>
    <dbReference type="NCBI Taxonomy" id="391904"/>
    <lineage>
        <taxon>Bacteria</taxon>
        <taxon>Bacillati</taxon>
        <taxon>Actinomycetota</taxon>
        <taxon>Actinomycetes</taxon>
        <taxon>Bifidobacteriales</taxon>
        <taxon>Bifidobacteriaceae</taxon>
        <taxon>Bifidobacterium</taxon>
    </lineage>
</organism>
<keyword id="KW-0963">Cytoplasm</keyword>
<keyword id="KW-0238">DNA-binding</keyword>
<keyword id="KW-0255">Endonuclease</keyword>
<keyword id="KW-0378">Hydrolase</keyword>
<keyword id="KW-0540">Nuclease</keyword>
<comment type="function">
    <text evidence="1">Cleaves both 3' and 5' ssDNA extremities of branched DNA structures.</text>
</comment>
<comment type="subcellular location">
    <subcellularLocation>
        <location evidence="1">Cytoplasm</location>
    </subcellularLocation>
</comment>
<comment type="similarity">
    <text evidence="1">Belongs to the NucS endonuclease family.</text>
</comment>
<evidence type="ECO:0000255" key="1">
    <source>
        <dbReference type="HAMAP-Rule" id="MF_00722"/>
    </source>
</evidence>
<evidence type="ECO:0000256" key="2">
    <source>
        <dbReference type="SAM" id="MobiDB-lite"/>
    </source>
</evidence>
<reference key="1">
    <citation type="journal article" date="2008" name="Proc. Natl. Acad. Sci. U.S.A.">
        <title>The genome sequence of Bifidobacterium longum subsp. infantis reveals adaptations for milk utilization within the infant microbiome.</title>
        <authorList>
            <person name="Sela D.A."/>
            <person name="Chapman J."/>
            <person name="Adeuya A."/>
            <person name="Kim J.H."/>
            <person name="Chen F."/>
            <person name="Whitehead T.R."/>
            <person name="Lapidus A."/>
            <person name="Rokhsar D.S."/>
            <person name="Lebrilla C.B."/>
            <person name="German J.B."/>
            <person name="Price N.P."/>
            <person name="Richardson P.M."/>
            <person name="Mills D.A."/>
        </authorList>
    </citation>
    <scope>NUCLEOTIDE SEQUENCE [LARGE SCALE GENOMIC DNA]</scope>
    <source>
        <strain>ATCC 15697 / DSM 20088 / JCM 1222 / NCTC 11817 / S12</strain>
    </source>
</reference>
<reference key="2">
    <citation type="journal article" date="2011" name="Nature">
        <title>Bifidobacteria can protect from enteropathogenic infection through production of acetate.</title>
        <authorList>
            <person name="Fukuda S."/>
            <person name="Toh H."/>
            <person name="Hase K."/>
            <person name="Oshima K."/>
            <person name="Nakanishi Y."/>
            <person name="Yoshimura K."/>
            <person name="Tobe T."/>
            <person name="Clarke J.M."/>
            <person name="Topping D.L."/>
            <person name="Suzuki T."/>
            <person name="Taylor T.D."/>
            <person name="Itoh K."/>
            <person name="Kikuchi J."/>
            <person name="Morita H."/>
            <person name="Hattori M."/>
            <person name="Ohno H."/>
        </authorList>
    </citation>
    <scope>NUCLEOTIDE SEQUENCE [LARGE SCALE GENOMIC DNA]</scope>
    <source>
        <strain>ATCC 15697 / DSM 20088 / JCM 1222 / NCTC 11817 / S12</strain>
    </source>
</reference>
<proteinExistence type="inferred from homology"/>
<dbReference type="EC" id="3.1.-.-" evidence="1"/>
<dbReference type="EMBL" id="CP001095">
    <property type="protein sequence ID" value="ACJ51436.1"/>
    <property type="molecule type" value="Genomic_DNA"/>
</dbReference>
<dbReference type="EMBL" id="AP010889">
    <property type="protein sequence ID" value="BAJ67910.1"/>
    <property type="molecule type" value="Genomic_DNA"/>
</dbReference>
<dbReference type="RefSeq" id="WP_007051476.1">
    <property type="nucleotide sequence ID" value="NZ_JDTT01000024.1"/>
</dbReference>
<dbReference type="SMR" id="B7GTZ5"/>
<dbReference type="GeneID" id="69577501"/>
<dbReference type="KEGG" id="bln:Blon_0311"/>
<dbReference type="KEGG" id="blon:BLIJ_0316"/>
<dbReference type="PATRIC" id="fig|391904.8.peg.319"/>
<dbReference type="HOGENOM" id="CLU_069350_0_1_11"/>
<dbReference type="Proteomes" id="UP000001360">
    <property type="component" value="Chromosome"/>
</dbReference>
<dbReference type="GO" id="GO:0005737">
    <property type="term" value="C:cytoplasm"/>
    <property type="evidence" value="ECO:0007669"/>
    <property type="project" value="UniProtKB-SubCell"/>
</dbReference>
<dbReference type="GO" id="GO:0003677">
    <property type="term" value="F:DNA binding"/>
    <property type="evidence" value="ECO:0007669"/>
    <property type="project" value="UniProtKB-KW"/>
</dbReference>
<dbReference type="GO" id="GO:0000014">
    <property type="term" value="F:single-stranded DNA endodeoxyribonuclease activity"/>
    <property type="evidence" value="ECO:0007669"/>
    <property type="project" value="UniProtKB-UniRule"/>
</dbReference>
<dbReference type="CDD" id="cd22341">
    <property type="entry name" value="NucS-like"/>
    <property type="match status" value="1"/>
</dbReference>
<dbReference type="Gene3D" id="2.70.180.20">
    <property type="match status" value="1"/>
</dbReference>
<dbReference type="Gene3D" id="3.40.1350.10">
    <property type="match status" value="1"/>
</dbReference>
<dbReference type="HAMAP" id="MF_00722">
    <property type="entry name" value="NucS"/>
    <property type="match status" value="1"/>
</dbReference>
<dbReference type="InterPro" id="IPR002793">
    <property type="entry name" value="Endonuclease_NucS"/>
</dbReference>
<dbReference type="InterPro" id="IPR048301">
    <property type="entry name" value="NucS_C"/>
</dbReference>
<dbReference type="InterPro" id="IPR048302">
    <property type="entry name" value="NucS_N"/>
</dbReference>
<dbReference type="InterPro" id="IPR049173">
    <property type="entry name" value="NucS_N_sf"/>
</dbReference>
<dbReference type="InterPro" id="IPR011856">
    <property type="entry name" value="tRNA_endonuc-like_dom_sf"/>
</dbReference>
<dbReference type="NCBIfam" id="NF002876">
    <property type="entry name" value="PRK03298.1"/>
    <property type="match status" value="1"/>
</dbReference>
<dbReference type="PANTHER" id="PTHR38814">
    <property type="entry name" value="ENDONUCLEASE NUCS"/>
    <property type="match status" value="1"/>
</dbReference>
<dbReference type="PANTHER" id="PTHR38814:SF1">
    <property type="entry name" value="ENDONUCLEASE NUCS"/>
    <property type="match status" value="1"/>
</dbReference>
<dbReference type="Pfam" id="PF01939">
    <property type="entry name" value="NucS_C"/>
    <property type="match status" value="1"/>
</dbReference>
<dbReference type="Pfam" id="PF21003">
    <property type="entry name" value="NucS_N"/>
    <property type="match status" value="1"/>
</dbReference>
<sequence length="256" mass="27867">MRVIVADCSAEYSGRLNASLPLAKRVLLIKADSSLLIFSELGSYKPLNWMTAPCTIREIDPAAKSAQHSRESVAGGAVDGDSATHSPESVAAGEPEKVLRVSADKGSDILEVTLQHIYSDQTYDLGEDPGLIKDGVEDHLQRYLAEQIERIGKGAKLVRREYPTAIGPVDIMAVNAEGEHVAVEIKRHGGIDGVEQLTRYCELLNRDPLLAPVHGIFAAQTITPQAQVLAKDRGFTCLILDYDDMKGTEDDSLRLF</sequence>
<protein>
    <recommendedName>
        <fullName evidence="1">Endonuclease NucS</fullName>
        <ecNumber evidence="1">3.1.-.-</ecNumber>
    </recommendedName>
</protein>
<name>NUCS_BIFLS</name>
<feature type="chain" id="PRO_1000198196" description="Endonuclease NucS">
    <location>
        <begin position="1"/>
        <end position="256"/>
    </location>
</feature>
<feature type="region of interest" description="Disordered" evidence="2">
    <location>
        <begin position="62"/>
        <end position="97"/>
    </location>
</feature>